<dbReference type="EC" id="2.1.3.15" evidence="1"/>
<dbReference type="EMBL" id="AP008231">
    <property type="protein sequence ID" value="BAD80329.1"/>
    <property type="molecule type" value="Genomic_DNA"/>
</dbReference>
<dbReference type="RefSeq" id="WP_011244449.1">
    <property type="nucleotide sequence ID" value="NZ_CP085785.1"/>
</dbReference>
<dbReference type="SMR" id="Q5N041"/>
<dbReference type="GeneID" id="72430830"/>
<dbReference type="KEGG" id="syc:syc2139_c"/>
<dbReference type="eggNOG" id="COG0777">
    <property type="taxonomic scope" value="Bacteria"/>
</dbReference>
<dbReference type="UniPathway" id="UPA00655">
    <property type="reaction ID" value="UER00711"/>
</dbReference>
<dbReference type="Proteomes" id="UP000001175">
    <property type="component" value="Chromosome"/>
</dbReference>
<dbReference type="GO" id="GO:0009317">
    <property type="term" value="C:acetyl-CoA carboxylase complex"/>
    <property type="evidence" value="ECO:0007669"/>
    <property type="project" value="InterPro"/>
</dbReference>
<dbReference type="GO" id="GO:0003989">
    <property type="term" value="F:acetyl-CoA carboxylase activity"/>
    <property type="evidence" value="ECO:0007669"/>
    <property type="project" value="InterPro"/>
</dbReference>
<dbReference type="GO" id="GO:0005524">
    <property type="term" value="F:ATP binding"/>
    <property type="evidence" value="ECO:0007669"/>
    <property type="project" value="UniProtKB-KW"/>
</dbReference>
<dbReference type="GO" id="GO:0016743">
    <property type="term" value="F:carboxyl- or carbamoyltransferase activity"/>
    <property type="evidence" value="ECO:0007669"/>
    <property type="project" value="UniProtKB-UniRule"/>
</dbReference>
<dbReference type="GO" id="GO:0008270">
    <property type="term" value="F:zinc ion binding"/>
    <property type="evidence" value="ECO:0007669"/>
    <property type="project" value="UniProtKB-UniRule"/>
</dbReference>
<dbReference type="GO" id="GO:0006633">
    <property type="term" value="P:fatty acid biosynthetic process"/>
    <property type="evidence" value="ECO:0007669"/>
    <property type="project" value="UniProtKB-KW"/>
</dbReference>
<dbReference type="GO" id="GO:2001295">
    <property type="term" value="P:malonyl-CoA biosynthetic process"/>
    <property type="evidence" value="ECO:0007669"/>
    <property type="project" value="UniProtKB-UniRule"/>
</dbReference>
<dbReference type="Gene3D" id="3.90.226.10">
    <property type="entry name" value="2-enoyl-CoA Hydratase, Chain A, domain 1"/>
    <property type="match status" value="1"/>
</dbReference>
<dbReference type="HAMAP" id="MF_01395">
    <property type="entry name" value="AcetylCoA_CT_beta"/>
    <property type="match status" value="1"/>
</dbReference>
<dbReference type="InterPro" id="IPR034733">
    <property type="entry name" value="AcCoA_carboxyl_beta"/>
</dbReference>
<dbReference type="InterPro" id="IPR000438">
    <property type="entry name" value="Acetyl_CoA_COase_Trfase_b_su"/>
</dbReference>
<dbReference type="InterPro" id="IPR029045">
    <property type="entry name" value="ClpP/crotonase-like_dom_sf"/>
</dbReference>
<dbReference type="InterPro" id="IPR011762">
    <property type="entry name" value="COA_CT_N"/>
</dbReference>
<dbReference type="InterPro" id="IPR041010">
    <property type="entry name" value="Znf-ACC"/>
</dbReference>
<dbReference type="NCBIfam" id="TIGR00515">
    <property type="entry name" value="accD"/>
    <property type="match status" value="1"/>
</dbReference>
<dbReference type="PANTHER" id="PTHR42995">
    <property type="entry name" value="ACETYL-COENZYME A CARBOXYLASE CARBOXYL TRANSFERASE SUBUNIT BETA, CHLOROPLASTIC"/>
    <property type="match status" value="1"/>
</dbReference>
<dbReference type="PANTHER" id="PTHR42995:SF5">
    <property type="entry name" value="ACETYL-COENZYME A CARBOXYLASE CARBOXYL TRANSFERASE SUBUNIT BETA, CHLOROPLASTIC"/>
    <property type="match status" value="1"/>
</dbReference>
<dbReference type="Pfam" id="PF01039">
    <property type="entry name" value="Carboxyl_trans"/>
    <property type="match status" value="1"/>
</dbReference>
<dbReference type="Pfam" id="PF17848">
    <property type="entry name" value="Zn_ribbon_ACC"/>
    <property type="match status" value="1"/>
</dbReference>
<dbReference type="PRINTS" id="PR01070">
    <property type="entry name" value="ACCCTRFRASEB"/>
</dbReference>
<dbReference type="SUPFAM" id="SSF52096">
    <property type="entry name" value="ClpP/crotonase"/>
    <property type="match status" value="1"/>
</dbReference>
<dbReference type="PROSITE" id="PS50980">
    <property type="entry name" value="COA_CT_NTER"/>
    <property type="match status" value="1"/>
</dbReference>
<protein>
    <recommendedName>
        <fullName evidence="1">Acetyl-coenzyme A carboxylase carboxyl transferase subunit beta</fullName>
        <shortName evidence="1">ACCase subunit beta</shortName>
        <shortName evidence="1">Acetyl-CoA carboxylase carboxyltransferase subunit beta</shortName>
        <ecNumber evidence="1">2.1.3.15</ecNumber>
    </recommendedName>
</protein>
<gene>
    <name evidence="1" type="primary">accD</name>
    <name type="ordered locus">syc2139_c</name>
</gene>
<sequence length="305" mass="33807">MSLLDWFANRRKTEPVVHDYQEREIADGLWTKCESCDALTYTKDLQANLMVCLQCGHHLRIYSDERIRQLIDPGTWQFLDEAVSPTDPLGFRDRKSYSDRLKETQANTGLSDAVRTGVGLLEGQPVALGVMDFRFMGGSMGSVVGEKLTRLIEKGTEQRSPVIIVCASGGARMQEGMLSLMQMAKISGALERHREAGLLYLPILTHPTTGGVTASFAMLGDLIIAEPKALIGFAGRRVIEQTLREKLPDDFQTAEYLQAHGFVDTIVPRTQLKKTLAQLIRLHQPQSPEMKLPLLESSSPATAPL</sequence>
<accession>Q5N041</accession>
<evidence type="ECO:0000255" key="1">
    <source>
        <dbReference type="HAMAP-Rule" id="MF_01395"/>
    </source>
</evidence>
<evidence type="ECO:0000255" key="2">
    <source>
        <dbReference type="PROSITE-ProRule" id="PRU01136"/>
    </source>
</evidence>
<feature type="chain" id="PRO_0000359072" description="Acetyl-coenzyme A carboxylase carboxyl transferase subunit beta">
    <location>
        <begin position="1"/>
        <end position="305"/>
    </location>
</feature>
<feature type="domain" description="CoA carboxyltransferase N-terminal" evidence="2">
    <location>
        <begin position="29"/>
        <end position="298"/>
    </location>
</feature>
<feature type="zinc finger region" description="C4-type" evidence="1">
    <location>
        <begin position="33"/>
        <end position="55"/>
    </location>
</feature>
<feature type="binding site" evidence="1">
    <location>
        <position position="33"/>
    </location>
    <ligand>
        <name>Zn(2+)</name>
        <dbReference type="ChEBI" id="CHEBI:29105"/>
    </ligand>
</feature>
<feature type="binding site" evidence="1">
    <location>
        <position position="36"/>
    </location>
    <ligand>
        <name>Zn(2+)</name>
        <dbReference type="ChEBI" id="CHEBI:29105"/>
    </ligand>
</feature>
<feature type="binding site" evidence="1">
    <location>
        <position position="52"/>
    </location>
    <ligand>
        <name>Zn(2+)</name>
        <dbReference type="ChEBI" id="CHEBI:29105"/>
    </ligand>
</feature>
<feature type="binding site" evidence="1">
    <location>
        <position position="55"/>
    </location>
    <ligand>
        <name>Zn(2+)</name>
        <dbReference type="ChEBI" id="CHEBI:29105"/>
    </ligand>
</feature>
<organism>
    <name type="scientific">Synechococcus sp. (strain ATCC 27144 / PCC 6301 / SAUG 1402/1)</name>
    <name type="common">Anacystis nidulans</name>
    <dbReference type="NCBI Taxonomy" id="269084"/>
    <lineage>
        <taxon>Bacteria</taxon>
        <taxon>Bacillati</taxon>
        <taxon>Cyanobacteriota</taxon>
        <taxon>Cyanophyceae</taxon>
        <taxon>Synechococcales</taxon>
        <taxon>Synechococcaceae</taxon>
        <taxon>Synechococcus</taxon>
    </lineage>
</organism>
<name>ACCD_SYNP6</name>
<reference key="1">
    <citation type="journal article" date="2007" name="Photosyn. Res.">
        <title>Complete nucleotide sequence of the freshwater unicellular cyanobacterium Synechococcus elongatus PCC 6301 chromosome: gene content and organization.</title>
        <authorList>
            <person name="Sugita C."/>
            <person name="Ogata K."/>
            <person name="Shikata M."/>
            <person name="Jikuya H."/>
            <person name="Takano J."/>
            <person name="Furumichi M."/>
            <person name="Kanehisa M."/>
            <person name="Omata T."/>
            <person name="Sugiura M."/>
            <person name="Sugita M."/>
        </authorList>
    </citation>
    <scope>NUCLEOTIDE SEQUENCE [LARGE SCALE GENOMIC DNA]</scope>
    <source>
        <strain>ATCC 27144 / PCC 6301 / SAUG 1402/1</strain>
    </source>
</reference>
<comment type="function">
    <text evidence="1">Component of the acetyl coenzyme A carboxylase (ACC) complex. Biotin carboxylase (BC) catalyzes the carboxylation of biotin on its carrier protein (BCCP) and then the CO(2) group is transferred by the transcarboxylase to acetyl-CoA to form malonyl-CoA.</text>
</comment>
<comment type="catalytic activity">
    <reaction evidence="1">
        <text>N(6)-carboxybiotinyl-L-lysyl-[protein] + acetyl-CoA = N(6)-biotinyl-L-lysyl-[protein] + malonyl-CoA</text>
        <dbReference type="Rhea" id="RHEA:54728"/>
        <dbReference type="Rhea" id="RHEA-COMP:10505"/>
        <dbReference type="Rhea" id="RHEA-COMP:10506"/>
        <dbReference type="ChEBI" id="CHEBI:57288"/>
        <dbReference type="ChEBI" id="CHEBI:57384"/>
        <dbReference type="ChEBI" id="CHEBI:83144"/>
        <dbReference type="ChEBI" id="CHEBI:83145"/>
        <dbReference type="EC" id="2.1.3.15"/>
    </reaction>
</comment>
<comment type="cofactor">
    <cofactor evidence="1">
        <name>Zn(2+)</name>
        <dbReference type="ChEBI" id="CHEBI:29105"/>
    </cofactor>
    <text evidence="1">Binds 1 zinc ion per subunit.</text>
</comment>
<comment type="pathway">
    <text evidence="1">Lipid metabolism; malonyl-CoA biosynthesis; malonyl-CoA from acetyl-CoA: step 1/1.</text>
</comment>
<comment type="subunit">
    <text evidence="1">Acetyl-CoA carboxylase is a heterohexamer composed of biotin carboxyl carrier protein (AccB), biotin carboxylase (AccC) and two subunits each of ACCase subunit alpha (AccA) and ACCase subunit beta (AccD).</text>
</comment>
<comment type="subcellular location">
    <subcellularLocation>
        <location evidence="1">Cytoplasm</location>
    </subcellularLocation>
</comment>
<comment type="similarity">
    <text evidence="1">Belongs to the AccD/PCCB family.</text>
</comment>
<keyword id="KW-0067">ATP-binding</keyword>
<keyword id="KW-0963">Cytoplasm</keyword>
<keyword id="KW-0275">Fatty acid biosynthesis</keyword>
<keyword id="KW-0276">Fatty acid metabolism</keyword>
<keyword id="KW-0444">Lipid biosynthesis</keyword>
<keyword id="KW-0443">Lipid metabolism</keyword>
<keyword id="KW-0479">Metal-binding</keyword>
<keyword id="KW-0547">Nucleotide-binding</keyword>
<keyword id="KW-0808">Transferase</keyword>
<keyword id="KW-0862">Zinc</keyword>
<keyword id="KW-0863">Zinc-finger</keyword>
<proteinExistence type="inferred from homology"/>